<organism>
    <name type="scientific">Bifidobacterium longum (strain DJO10A)</name>
    <dbReference type="NCBI Taxonomy" id="205913"/>
    <lineage>
        <taxon>Bacteria</taxon>
        <taxon>Bacillati</taxon>
        <taxon>Actinomycetota</taxon>
        <taxon>Actinomycetes</taxon>
        <taxon>Bifidobacteriales</taxon>
        <taxon>Bifidobacteriaceae</taxon>
        <taxon>Bifidobacterium</taxon>
    </lineage>
</organism>
<sequence>MTQAASGIDLFIPEVYDIVWSLIILVIVAVFFYKFFMPKFNAIFDERAAKIQGNIAKAEQARKDADEAKAKYEAQLSTARVDAAKIRDDARAEASHIIADARSRAESDAAQITASAQRSIESQHQQAIVSLKGEVGALATALAGKILGAKLEDNDVQSSMIDSMIDDLGAKK</sequence>
<proteinExistence type="inferred from homology"/>
<feature type="chain" id="PRO_0000368354" description="ATP synthase subunit b">
    <location>
        <begin position="1"/>
        <end position="172"/>
    </location>
</feature>
<feature type="transmembrane region" description="Helical" evidence="1">
    <location>
        <begin position="18"/>
        <end position="38"/>
    </location>
</feature>
<keyword id="KW-0066">ATP synthesis</keyword>
<keyword id="KW-1003">Cell membrane</keyword>
<keyword id="KW-0138">CF(0)</keyword>
<keyword id="KW-0375">Hydrogen ion transport</keyword>
<keyword id="KW-0406">Ion transport</keyword>
<keyword id="KW-0472">Membrane</keyword>
<keyword id="KW-0812">Transmembrane</keyword>
<keyword id="KW-1133">Transmembrane helix</keyword>
<keyword id="KW-0813">Transport</keyword>
<evidence type="ECO:0000255" key="1">
    <source>
        <dbReference type="HAMAP-Rule" id="MF_01398"/>
    </source>
</evidence>
<gene>
    <name evidence="1" type="primary">atpF</name>
    <name type="ordered locus">BLD_1127</name>
</gene>
<comment type="function">
    <text evidence="1">F(1)F(0) ATP synthase produces ATP from ADP in the presence of a proton or sodium gradient. F-type ATPases consist of two structural domains, F(1) containing the extramembraneous catalytic core and F(0) containing the membrane proton channel, linked together by a central stalk and a peripheral stalk. During catalysis, ATP synthesis in the catalytic domain of F(1) is coupled via a rotary mechanism of the central stalk subunits to proton translocation.</text>
</comment>
<comment type="function">
    <text evidence="1">Component of the F(0) channel, it forms part of the peripheral stalk, linking F(1) to F(0).</text>
</comment>
<comment type="subunit">
    <text evidence="1">F-type ATPases have 2 components, F(1) - the catalytic core - and F(0) - the membrane proton channel. F(1) has five subunits: alpha(3), beta(3), gamma(1), delta(1), epsilon(1). F(0) has three main subunits: a(1), b(2) and c(10-14). The alpha and beta chains form an alternating ring which encloses part of the gamma chain. F(1) is attached to F(0) by a central stalk formed by the gamma and epsilon chains, while a peripheral stalk is formed by the delta and b chains.</text>
</comment>
<comment type="subcellular location">
    <subcellularLocation>
        <location evidence="1">Cell membrane</location>
        <topology evidence="1">Single-pass membrane protein</topology>
    </subcellularLocation>
</comment>
<comment type="similarity">
    <text evidence="1">Belongs to the ATPase B chain family.</text>
</comment>
<protein>
    <recommendedName>
        <fullName evidence="1">ATP synthase subunit b</fullName>
    </recommendedName>
    <alternativeName>
        <fullName evidence="1">ATP synthase F(0) sector subunit b</fullName>
    </alternativeName>
    <alternativeName>
        <fullName evidence="1">ATPase subunit I</fullName>
    </alternativeName>
    <alternativeName>
        <fullName evidence="1">F-type ATPase subunit b</fullName>
        <shortName evidence="1">F-ATPase subunit b</shortName>
    </alternativeName>
</protein>
<name>ATPF_BIFLD</name>
<reference key="1">
    <citation type="journal article" date="2008" name="BMC Genomics">
        <title>Comparative genomic analysis of the gut bacterium Bifidobacterium longum reveals loci susceptible to deletion during pure culture growth.</title>
        <authorList>
            <person name="Lee J.H."/>
            <person name="Karamychev V.N."/>
            <person name="Kozyavkin S.A."/>
            <person name="Mills D."/>
            <person name="Pavlov A.R."/>
            <person name="Pavlova N.V."/>
            <person name="Polouchine N.N."/>
            <person name="Richardson P.M."/>
            <person name="Shakhova V.V."/>
            <person name="Slesarev A.I."/>
            <person name="Weimer B."/>
            <person name="O'Sullivan D.J."/>
        </authorList>
    </citation>
    <scope>NUCLEOTIDE SEQUENCE [LARGE SCALE GENOMIC DNA]</scope>
    <source>
        <strain>DJO10A</strain>
    </source>
</reference>
<accession>B3DTV4</accession>
<dbReference type="EMBL" id="CP000605">
    <property type="protein sequence ID" value="ACD98573.1"/>
    <property type="molecule type" value="Genomic_DNA"/>
</dbReference>
<dbReference type="RefSeq" id="WP_007051482.1">
    <property type="nucleotide sequence ID" value="NZ_AABM02000027.1"/>
</dbReference>
<dbReference type="SMR" id="B3DTV4"/>
<dbReference type="KEGG" id="blj:BLD_1127"/>
<dbReference type="HOGENOM" id="CLU_079215_5_0_11"/>
<dbReference type="Proteomes" id="UP000002419">
    <property type="component" value="Chromosome"/>
</dbReference>
<dbReference type="GO" id="GO:0005886">
    <property type="term" value="C:plasma membrane"/>
    <property type="evidence" value="ECO:0007669"/>
    <property type="project" value="UniProtKB-SubCell"/>
</dbReference>
<dbReference type="GO" id="GO:0045259">
    <property type="term" value="C:proton-transporting ATP synthase complex"/>
    <property type="evidence" value="ECO:0007669"/>
    <property type="project" value="UniProtKB-KW"/>
</dbReference>
<dbReference type="GO" id="GO:0046933">
    <property type="term" value="F:proton-transporting ATP synthase activity, rotational mechanism"/>
    <property type="evidence" value="ECO:0007669"/>
    <property type="project" value="UniProtKB-UniRule"/>
</dbReference>
<dbReference type="GO" id="GO:0046961">
    <property type="term" value="F:proton-transporting ATPase activity, rotational mechanism"/>
    <property type="evidence" value="ECO:0007669"/>
    <property type="project" value="TreeGrafter"/>
</dbReference>
<dbReference type="CDD" id="cd06503">
    <property type="entry name" value="ATP-synt_Fo_b"/>
    <property type="match status" value="1"/>
</dbReference>
<dbReference type="Gene3D" id="1.20.5.620">
    <property type="entry name" value="F1F0 ATP synthase subunit B, membrane domain"/>
    <property type="match status" value="1"/>
</dbReference>
<dbReference type="HAMAP" id="MF_01398">
    <property type="entry name" value="ATP_synth_b_bprime"/>
    <property type="match status" value="1"/>
</dbReference>
<dbReference type="InterPro" id="IPR028987">
    <property type="entry name" value="ATP_synth_B-like_membr_sf"/>
</dbReference>
<dbReference type="InterPro" id="IPR002146">
    <property type="entry name" value="ATP_synth_b/b'su_bac/chlpt"/>
</dbReference>
<dbReference type="InterPro" id="IPR005864">
    <property type="entry name" value="ATP_synth_F0_bsu_bac"/>
</dbReference>
<dbReference type="InterPro" id="IPR050059">
    <property type="entry name" value="ATP_synthase_B_chain"/>
</dbReference>
<dbReference type="NCBIfam" id="TIGR01144">
    <property type="entry name" value="ATP_synt_b"/>
    <property type="match status" value="1"/>
</dbReference>
<dbReference type="NCBIfam" id="NF004412">
    <property type="entry name" value="PRK05759.1-3"/>
    <property type="match status" value="1"/>
</dbReference>
<dbReference type="PANTHER" id="PTHR33445:SF1">
    <property type="entry name" value="ATP SYNTHASE SUBUNIT B"/>
    <property type="match status" value="1"/>
</dbReference>
<dbReference type="PANTHER" id="PTHR33445">
    <property type="entry name" value="ATP SYNTHASE SUBUNIT B', CHLOROPLASTIC"/>
    <property type="match status" value="1"/>
</dbReference>
<dbReference type="Pfam" id="PF00430">
    <property type="entry name" value="ATP-synt_B"/>
    <property type="match status" value="1"/>
</dbReference>
<dbReference type="SUPFAM" id="SSF81573">
    <property type="entry name" value="F1F0 ATP synthase subunit B, membrane domain"/>
    <property type="match status" value="1"/>
</dbReference>